<feature type="chain" id="PRO_0000298661" description="Serpentine receptor class alpha-10">
    <location>
        <begin position="1"/>
        <end position="332"/>
    </location>
</feature>
<feature type="topological domain" description="Extracellular" evidence="2">
    <location>
        <begin position="1"/>
        <end position="26"/>
    </location>
</feature>
<feature type="transmembrane region" description="Helical; Name=1" evidence="2">
    <location>
        <begin position="27"/>
        <end position="47"/>
    </location>
</feature>
<feature type="topological domain" description="Cytoplasmic" evidence="2">
    <location>
        <begin position="48"/>
        <end position="64"/>
    </location>
</feature>
<feature type="transmembrane region" description="Helical; Name=2" evidence="2">
    <location>
        <begin position="65"/>
        <end position="85"/>
    </location>
</feature>
<feature type="topological domain" description="Extracellular" evidence="2">
    <location>
        <begin position="86"/>
        <end position="109"/>
    </location>
</feature>
<feature type="transmembrane region" description="Helical; Name=3" evidence="2">
    <location>
        <begin position="110"/>
        <end position="132"/>
    </location>
</feature>
<feature type="topological domain" description="Cytoplasmic" evidence="2">
    <location>
        <begin position="133"/>
        <end position="146"/>
    </location>
</feature>
<feature type="transmembrane region" description="Helical; Name=4" evidence="2">
    <location>
        <begin position="147"/>
        <end position="167"/>
    </location>
</feature>
<feature type="topological domain" description="Extracellular" evidence="2">
    <location>
        <begin position="168"/>
        <end position="191"/>
    </location>
</feature>
<feature type="transmembrane region" description="Helical; Name=5" evidence="2">
    <location>
        <begin position="192"/>
        <end position="212"/>
    </location>
</feature>
<feature type="topological domain" description="Cytoplasmic" evidence="2">
    <location>
        <begin position="213"/>
        <end position="239"/>
    </location>
</feature>
<feature type="transmembrane region" description="Helical; Name=6" evidence="2">
    <location>
        <begin position="240"/>
        <end position="260"/>
    </location>
</feature>
<feature type="topological domain" description="Extracellular" evidence="2">
    <location>
        <begin position="261"/>
        <end position="276"/>
    </location>
</feature>
<feature type="transmembrane region" description="Helical; Name=7" evidence="2">
    <location>
        <begin position="277"/>
        <end position="297"/>
    </location>
</feature>
<feature type="topological domain" description="Cytoplasmic" evidence="2">
    <location>
        <begin position="298"/>
        <end position="332"/>
    </location>
</feature>
<sequence>MTSSNISICATEDQMVLQTSLLLRVNVILMTTVAIFTFVLTYRALFILKQRPIFHKSTKILLYTSLIFVNIHEIIFMVIQCVAFIRSFTLSDKPCEIMRTTLECRFKNHVLIFGIAGMNFNQFGLTVDRLLATVIPQTYSHLGSFPGILISILVIGCSIAAPLIIAIGDPYDDIVPNCFFFPQHSAPRANVFLIILSALVIASIFLNLIIIFANKKLEKGTRYYVSQRYQKREALISTRIIVYIAASQFLGMVLYSTIVLTLRLHKSMIPVSMYHNIVWWAYTVPFAAVALPALLIHRINLVGSNRKRVINRITAKVETQEEHMKSLKELWG</sequence>
<comment type="subcellular location">
    <subcellularLocation>
        <location evidence="2">Membrane</location>
        <topology evidence="2">Multi-pass membrane protein</topology>
    </subcellularLocation>
</comment>
<comment type="similarity">
    <text evidence="2">Belongs to the nematode receptor-like protein sra family.</text>
</comment>
<name>SRA10_CAEBR</name>
<gene>
    <name evidence="1" type="primary">sra-10</name>
    <name type="ORF">CBG20644</name>
</gene>
<dbReference type="EMBL" id="HE600991">
    <property type="protein sequence ID" value="CAP37618.1"/>
    <property type="molecule type" value="Genomic_DNA"/>
</dbReference>
<dbReference type="SMR" id="Q60T32"/>
<dbReference type="FunCoup" id="Q60T32">
    <property type="interactions" value="5"/>
</dbReference>
<dbReference type="EnsemblMetazoa" id="CBG20644.1">
    <property type="protein sequence ID" value="CBG20644.1"/>
    <property type="gene ID" value="WBGene00039589"/>
</dbReference>
<dbReference type="KEGG" id="cbr:CBG_20644"/>
<dbReference type="CTD" id="8573485"/>
<dbReference type="WormBase" id="CBG20644">
    <property type="protein sequence ID" value="CBP19915"/>
    <property type="gene ID" value="WBGene00039589"/>
    <property type="gene designation" value="Cbr-sra-10"/>
</dbReference>
<dbReference type="eggNOG" id="ENOG502THB2">
    <property type="taxonomic scope" value="Eukaryota"/>
</dbReference>
<dbReference type="HOGENOM" id="CLU_048025_0_1_1"/>
<dbReference type="InParanoid" id="Q60T32"/>
<dbReference type="OMA" id="CEIMRTT"/>
<dbReference type="Proteomes" id="UP000008549">
    <property type="component" value="Unassembled WGS sequence"/>
</dbReference>
<dbReference type="GO" id="GO:0016020">
    <property type="term" value="C:membrane"/>
    <property type="evidence" value="ECO:0007669"/>
    <property type="project" value="UniProtKB-SubCell"/>
</dbReference>
<dbReference type="GO" id="GO:0004930">
    <property type="term" value="F:G protein-coupled receptor activity"/>
    <property type="evidence" value="ECO:0007669"/>
    <property type="project" value="InterPro"/>
</dbReference>
<dbReference type="GO" id="GO:0004984">
    <property type="term" value="F:olfactory receptor activity"/>
    <property type="evidence" value="ECO:0000318"/>
    <property type="project" value="GO_Central"/>
</dbReference>
<dbReference type="GO" id="GO:0050907">
    <property type="term" value="P:detection of chemical stimulus involved in sensory perception"/>
    <property type="evidence" value="ECO:0000318"/>
    <property type="project" value="GO_Central"/>
</dbReference>
<dbReference type="InterPro" id="IPR000344">
    <property type="entry name" value="7TM_GPCR_serpentine_rcpt_Sra"/>
</dbReference>
<dbReference type="InterPro" id="IPR051080">
    <property type="entry name" value="Nematode_rcpt-like_serp_alpha"/>
</dbReference>
<dbReference type="PANTHER" id="PTHR31357">
    <property type="entry name" value="SERPENTINE RECEPTOR CLASS ALPHA-10"/>
    <property type="match status" value="1"/>
</dbReference>
<dbReference type="PANTHER" id="PTHR31357:SF19">
    <property type="entry name" value="SERPENTINE RECEPTOR CLASS ALPHA-10"/>
    <property type="match status" value="1"/>
</dbReference>
<dbReference type="Pfam" id="PF02117">
    <property type="entry name" value="7TM_GPCR_Sra"/>
    <property type="match status" value="1"/>
</dbReference>
<dbReference type="PRINTS" id="PR00697">
    <property type="entry name" value="TMPROTEINSRA"/>
</dbReference>
<evidence type="ECO:0000250" key="1">
    <source>
        <dbReference type="UniProtKB" id="Q20405"/>
    </source>
</evidence>
<evidence type="ECO:0000255" key="2"/>
<reference key="1">
    <citation type="journal article" date="2003" name="PLoS Biol.">
        <title>The genome sequence of Caenorhabditis briggsae: a platform for comparative genomics.</title>
        <authorList>
            <person name="Stein L.D."/>
            <person name="Bao Z."/>
            <person name="Blasiar D."/>
            <person name="Blumenthal T."/>
            <person name="Brent M.R."/>
            <person name="Chen N."/>
            <person name="Chinwalla A."/>
            <person name="Clarke L."/>
            <person name="Clee C."/>
            <person name="Coghlan A."/>
            <person name="Coulson A."/>
            <person name="D'Eustachio P."/>
            <person name="Fitch D.H.A."/>
            <person name="Fulton L.A."/>
            <person name="Fulton R.E."/>
            <person name="Griffiths-Jones S."/>
            <person name="Harris T.W."/>
            <person name="Hillier L.W."/>
            <person name="Kamath R."/>
            <person name="Kuwabara P.E."/>
            <person name="Mardis E.R."/>
            <person name="Marra M.A."/>
            <person name="Miner T.L."/>
            <person name="Minx P."/>
            <person name="Mullikin J.C."/>
            <person name="Plumb R.W."/>
            <person name="Rogers J."/>
            <person name="Schein J.E."/>
            <person name="Sohrmann M."/>
            <person name="Spieth J."/>
            <person name="Stajich J.E."/>
            <person name="Wei C."/>
            <person name="Willey D."/>
            <person name="Wilson R.K."/>
            <person name="Durbin R.M."/>
            <person name="Waterston R.H."/>
        </authorList>
    </citation>
    <scope>NUCLEOTIDE SEQUENCE [LARGE SCALE GENOMIC DNA]</scope>
    <source>
        <strain>AF16</strain>
    </source>
</reference>
<keyword id="KW-0472">Membrane</keyword>
<keyword id="KW-1185">Reference proteome</keyword>
<keyword id="KW-0812">Transmembrane</keyword>
<keyword id="KW-1133">Transmembrane helix</keyword>
<organism>
    <name type="scientific">Caenorhabditis briggsae</name>
    <dbReference type="NCBI Taxonomy" id="6238"/>
    <lineage>
        <taxon>Eukaryota</taxon>
        <taxon>Metazoa</taxon>
        <taxon>Ecdysozoa</taxon>
        <taxon>Nematoda</taxon>
        <taxon>Chromadorea</taxon>
        <taxon>Rhabditida</taxon>
        <taxon>Rhabditina</taxon>
        <taxon>Rhabditomorpha</taxon>
        <taxon>Rhabditoidea</taxon>
        <taxon>Rhabditidae</taxon>
        <taxon>Peloderinae</taxon>
        <taxon>Caenorhabditis</taxon>
    </lineage>
</organism>
<accession>Q60T32</accession>
<accession>A8XYA1</accession>
<proteinExistence type="inferred from homology"/>
<protein>
    <recommendedName>
        <fullName>Serpentine receptor class alpha-10</fullName>
        <shortName>Protein sra-10</shortName>
    </recommendedName>
</protein>